<evidence type="ECO:0000255" key="1">
    <source>
        <dbReference type="HAMAP-Rule" id="MF_00817"/>
    </source>
</evidence>
<name>QUEF_CUPTR</name>
<proteinExistence type="inferred from homology"/>
<gene>
    <name evidence="1" type="primary">queF</name>
    <name type="ordered locus">RALTA_A0368</name>
</gene>
<comment type="function">
    <text evidence="1">Catalyzes the NADPH-dependent reduction of 7-cyano-7-deazaguanine (preQ0) to 7-aminomethyl-7-deazaguanine (preQ1).</text>
</comment>
<comment type="catalytic activity">
    <reaction evidence="1">
        <text>7-aminomethyl-7-carbaguanine + 2 NADP(+) = 7-cyano-7-deazaguanine + 2 NADPH + 3 H(+)</text>
        <dbReference type="Rhea" id="RHEA:13409"/>
        <dbReference type="ChEBI" id="CHEBI:15378"/>
        <dbReference type="ChEBI" id="CHEBI:45075"/>
        <dbReference type="ChEBI" id="CHEBI:57783"/>
        <dbReference type="ChEBI" id="CHEBI:58349"/>
        <dbReference type="ChEBI" id="CHEBI:58703"/>
        <dbReference type="EC" id="1.7.1.13"/>
    </reaction>
</comment>
<comment type="pathway">
    <text evidence="1">tRNA modification; tRNA-queuosine biosynthesis.</text>
</comment>
<comment type="subunit">
    <text evidence="1">Homodimer.</text>
</comment>
<comment type="subcellular location">
    <subcellularLocation>
        <location evidence="1">Cytoplasm</location>
    </subcellularLocation>
</comment>
<comment type="similarity">
    <text evidence="1">Belongs to the GTP cyclohydrolase I family. QueF type 2 subfamily.</text>
</comment>
<accession>B2AGY8</accession>
<sequence>MSLPEHSPLGKPSAYKTEYDASLLFPIPRQPKRTEIGLPEGKPVPFFGVDIWNAYELSWLNLKGKPQVALATFIIPSDTPNIVESKSFKLYLNSFNQTRIASPEALQQLLHHDLSEATGGTVQVRLVTEADLGKQQMGELDGLLLDRLDIEVDRYEPAPELLFADQDETPVEETLVSHLLKSNCLVTGQPDWGSVQIRYVGAPINQEALLKYLISFRNHNEFHEQCVERIFMDVMRQCKPVKLAVYARYTRRGGLDINPFRTNFNTAWPDNKRNARQ</sequence>
<protein>
    <recommendedName>
        <fullName evidence="1">NADPH-dependent 7-cyano-7-deazaguanine reductase</fullName>
        <ecNumber evidence="1">1.7.1.13</ecNumber>
    </recommendedName>
    <alternativeName>
        <fullName evidence="1">7-cyano-7-carbaguanine reductase</fullName>
    </alternativeName>
    <alternativeName>
        <fullName evidence="1">NADPH-dependent nitrile oxidoreductase</fullName>
    </alternativeName>
    <alternativeName>
        <fullName evidence="1">PreQ(0) reductase</fullName>
    </alternativeName>
</protein>
<feature type="chain" id="PRO_1000134276" description="NADPH-dependent 7-cyano-7-deazaguanine reductase">
    <location>
        <begin position="1"/>
        <end position="277"/>
    </location>
</feature>
<feature type="active site" description="Thioimide intermediate" evidence="1">
    <location>
        <position position="184"/>
    </location>
</feature>
<feature type="active site" description="Proton donor" evidence="1">
    <location>
        <position position="191"/>
    </location>
</feature>
<feature type="binding site" evidence="1">
    <location>
        <begin position="83"/>
        <end position="85"/>
    </location>
    <ligand>
        <name>substrate</name>
    </ligand>
</feature>
<feature type="binding site" evidence="1">
    <location>
        <begin position="85"/>
        <end position="86"/>
    </location>
    <ligand>
        <name>NADPH</name>
        <dbReference type="ChEBI" id="CHEBI:57783"/>
    </ligand>
</feature>
<feature type="binding site" evidence="1">
    <location>
        <begin position="223"/>
        <end position="224"/>
    </location>
    <ligand>
        <name>substrate</name>
    </ligand>
</feature>
<feature type="binding site" evidence="1">
    <location>
        <begin position="252"/>
        <end position="253"/>
    </location>
    <ligand>
        <name>NADPH</name>
        <dbReference type="ChEBI" id="CHEBI:57783"/>
    </ligand>
</feature>
<organism>
    <name type="scientific">Cupriavidus taiwanensis (strain DSM 17343 / BCRC 17206 / CCUG 44338 / CIP 107171 / LMG 19424 / R1)</name>
    <name type="common">Ralstonia taiwanensis (strain LMG 19424)</name>
    <dbReference type="NCBI Taxonomy" id="977880"/>
    <lineage>
        <taxon>Bacteria</taxon>
        <taxon>Pseudomonadati</taxon>
        <taxon>Pseudomonadota</taxon>
        <taxon>Betaproteobacteria</taxon>
        <taxon>Burkholderiales</taxon>
        <taxon>Burkholderiaceae</taxon>
        <taxon>Cupriavidus</taxon>
    </lineage>
</organism>
<reference key="1">
    <citation type="journal article" date="2008" name="Genome Res.">
        <title>Genome sequence of the beta-rhizobium Cupriavidus taiwanensis and comparative genomics of rhizobia.</title>
        <authorList>
            <person name="Amadou C."/>
            <person name="Pascal G."/>
            <person name="Mangenot S."/>
            <person name="Glew M."/>
            <person name="Bontemps C."/>
            <person name="Capela D."/>
            <person name="Carrere S."/>
            <person name="Cruveiller S."/>
            <person name="Dossat C."/>
            <person name="Lajus A."/>
            <person name="Marchetti M."/>
            <person name="Poinsot V."/>
            <person name="Rouy Z."/>
            <person name="Servin B."/>
            <person name="Saad M."/>
            <person name="Schenowitz C."/>
            <person name="Barbe V."/>
            <person name="Batut J."/>
            <person name="Medigue C."/>
            <person name="Masson-Boivin C."/>
        </authorList>
    </citation>
    <scope>NUCLEOTIDE SEQUENCE [LARGE SCALE GENOMIC DNA]</scope>
    <source>
        <strain>DSM 17343 / BCRC 17206 / CCUG 44338 / CIP 107171 / LMG 19424 / R1</strain>
    </source>
</reference>
<keyword id="KW-0963">Cytoplasm</keyword>
<keyword id="KW-0521">NADP</keyword>
<keyword id="KW-0560">Oxidoreductase</keyword>
<keyword id="KW-0671">Queuosine biosynthesis</keyword>
<dbReference type="EC" id="1.7.1.13" evidence="1"/>
<dbReference type="EMBL" id="CU633749">
    <property type="protein sequence ID" value="CAP63037.1"/>
    <property type="molecule type" value="Genomic_DNA"/>
</dbReference>
<dbReference type="RefSeq" id="WP_012351702.1">
    <property type="nucleotide sequence ID" value="NC_010528.1"/>
</dbReference>
<dbReference type="SMR" id="B2AGY8"/>
<dbReference type="GeneID" id="29760836"/>
<dbReference type="KEGG" id="cti:RALTA_A0368"/>
<dbReference type="eggNOG" id="COG0780">
    <property type="taxonomic scope" value="Bacteria"/>
</dbReference>
<dbReference type="eggNOG" id="COG2904">
    <property type="taxonomic scope" value="Bacteria"/>
</dbReference>
<dbReference type="HOGENOM" id="CLU_054738_0_0_4"/>
<dbReference type="BioCyc" id="CTAI977880:RALTA_RS01800-MONOMER"/>
<dbReference type="UniPathway" id="UPA00392"/>
<dbReference type="Proteomes" id="UP000001692">
    <property type="component" value="Chromosome 1"/>
</dbReference>
<dbReference type="GO" id="GO:0005737">
    <property type="term" value="C:cytoplasm"/>
    <property type="evidence" value="ECO:0007669"/>
    <property type="project" value="UniProtKB-SubCell"/>
</dbReference>
<dbReference type="GO" id="GO:0033739">
    <property type="term" value="F:preQ1 synthase activity"/>
    <property type="evidence" value="ECO:0007669"/>
    <property type="project" value="UniProtKB-UniRule"/>
</dbReference>
<dbReference type="GO" id="GO:0008616">
    <property type="term" value="P:queuosine biosynthetic process"/>
    <property type="evidence" value="ECO:0007669"/>
    <property type="project" value="UniProtKB-UniRule"/>
</dbReference>
<dbReference type="GO" id="GO:0006400">
    <property type="term" value="P:tRNA modification"/>
    <property type="evidence" value="ECO:0007669"/>
    <property type="project" value="UniProtKB-UniRule"/>
</dbReference>
<dbReference type="Gene3D" id="3.30.1130.10">
    <property type="match status" value="2"/>
</dbReference>
<dbReference type="HAMAP" id="MF_00817">
    <property type="entry name" value="QueF_type2"/>
    <property type="match status" value="1"/>
</dbReference>
<dbReference type="InterPro" id="IPR043133">
    <property type="entry name" value="GTP-CH-I_C/QueF"/>
</dbReference>
<dbReference type="InterPro" id="IPR050084">
    <property type="entry name" value="NADPH_dep_7-cyano-7-deazaG_red"/>
</dbReference>
<dbReference type="InterPro" id="IPR029500">
    <property type="entry name" value="QueF"/>
</dbReference>
<dbReference type="InterPro" id="IPR029139">
    <property type="entry name" value="QueF_N"/>
</dbReference>
<dbReference type="InterPro" id="IPR016428">
    <property type="entry name" value="QueF_type2"/>
</dbReference>
<dbReference type="NCBIfam" id="TIGR03138">
    <property type="entry name" value="QueF"/>
    <property type="match status" value="1"/>
</dbReference>
<dbReference type="PANTHER" id="PTHR34354">
    <property type="entry name" value="NADPH-DEPENDENT 7-CYANO-7-DEAZAGUANINE REDUCTASE"/>
    <property type="match status" value="1"/>
</dbReference>
<dbReference type="PANTHER" id="PTHR34354:SF1">
    <property type="entry name" value="NADPH-DEPENDENT 7-CYANO-7-DEAZAGUANINE REDUCTASE"/>
    <property type="match status" value="1"/>
</dbReference>
<dbReference type="Pfam" id="PF14489">
    <property type="entry name" value="QueF"/>
    <property type="match status" value="1"/>
</dbReference>
<dbReference type="Pfam" id="PF14819">
    <property type="entry name" value="QueF_N"/>
    <property type="match status" value="1"/>
</dbReference>
<dbReference type="PIRSF" id="PIRSF004750">
    <property type="entry name" value="Nitrile_oxidored_YqcD_prd"/>
    <property type="match status" value="1"/>
</dbReference>
<dbReference type="SUPFAM" id="SSF55620">
    <property type="entry name" value="Tetrahydrobiopterin biosynthesis enzymes-like"/>
    <property type="match status" value="1"/>
</dbReference>